<reference key="1">
    <citation type="journal article" date="2006" name="Genome Biol.">
        <title>The genome of Rhizobium leguminosarum has recognizable core and accessory components.</title>
        <authorList>
            <person name="Young J.P.W."/>
            <person name="Crossman L.C."/>
            <person name="Johnston A.W.B."/>
            <person name="Thomson N.R."/>
            <person name="Ghazoui Z.F."/>
            <person name="Hull K.H."/>
            <person name="Wexler M."/>
            <person name="Curson A.R.J."/>
            <person name="Todd J.D."/>
            <person name="Poole P.S."/>
            <person name="Mauchline T.H."/>
            <person name="East A.K."/>
            <person name="Quail M.A."/>
            <person name="Churcher C."/>
            <person name="Arrowsmith C."/>
            <person name="Cherevach I."/>
            <person name="Chillingworth T."/>
            <person name="Clarke K."/>
            <person name="Cronin A."/>
            <person name="Davis P."/>
            <person name="Fraser A."/>
            <person name="Hance Z."/>
            <person name="Hauser H."/>
            <person name="Jagels K."/>
            <person name="Moule S."/>
            <person name="Mungall K."/>
            <person name="Norbertczak H."/>
            <person name="Rabbinowitsch E."/>
            <person name="Sanders M."/>
            <person name="Simmonds M."/>
            <person name="Whitehead S."/>
            <person name="Parkhill J."/>
        </authorList>
    </citation>
    <scope>NUCLEOTIDE SEQUENCE [LARGE SCALE GENOMIC DNA]</scope>
    <source>
        <strain>DSM 114642 / LMG 32736 / 3841</strain>
    </source>
</reference>
<accession>Q1MAE9</accession>
<feature type="chain" id="PRO_1000021825" description="Homoserine O-acetyltransferase">
    <location>
        <begin position="1"/>
        <end position="307"/>
    </location>
</feature>
<feature type="active site" description="Acyl-thioester intermediate" evidence="1">
    <location>
        <position position="142"/>
    </location>
</feature>
<feature type="active site" description="Proton acceptor" evidence="1">
    <location>
        <position position="235"/>
    </location>
</feature>
<feature type="active site" evidence="1">
    <location>
        <position position="237"/>
    </location>
</feature>
<feature type="binding site" evidence="1">
    <location>
        <position position="163"/>
    </location>
    <ligand>
        <name>substrate</name>
    </ligand>
</feature>
<feature type="binding site" evidence="1">
    <location>
        <position position="192"/>
    </location>
    <ligand>
        <name>substrate</name>
    </ligand>
</feature>
<feature type="binding site" evidence="1">
    <location>
        <position position="249"/>
    </location>
    <ligand>
        <name>substrate</name>
    </ligand>
</feature>
<feature type="site" description="Important for acyl-CoA specificity" evidence="1">
    <location>
        <position position="111"/>
    </location>
</feature>
<feature type="site" description="Important for substrate specificity" evidence="1">
    <location>
        <position position="192"/>
    </location>
</feature>
<dbReference type="EC" id="2.3.1.31" evidence="1"/>
<dbReference type="EMBL" id="AM236080">
    <property type="protein sequence ID" value="CAK10089.1"/>
    <property type="molecule type" value="Genomic_DNA"/>
</dbReference>
<dbReference type="SMR" id="Q1MAE9"/>
<dbReference type="EnsemblBacteria" id="CAK10089">
    <property type="protein sequence ID" value="CAK10089"/>
    <property type="gene ID" value="RL4606"/>
</dbReference>
<dbReference type="KEGG" id="rle:RL4606"/>
<dbReference type="eggNOG" id="COG1897">
    <property type="taxonomic scope" value="Bacteria"/>
</dbReference>
<dbReference type="HOGENOM" id="CLU_057851_0_1_5"/>
<dbReference type="UniPathway" id="UPA00051">
    <property type="reaction ID" value="UER00074"/>
</dbReference>
<dbReference type="Proteomes" id="UP000006575">
    <property type="component" value="Chromosome"/>
</dbReference>
<dbReference type="GO" id="GO:0005737">
    <property type="term" value="C:cytoplasm"/>
    <property type="evidence" value="ECO:0007669"/>
    <property type="project" value="UniProtKB-SubCell"/>
</dbReference>
<dbReference type="GO" id="GO:0004414">
    <property type="term" value="F:homoserine O-acetyltransferase activity"/>
    <property type="evidence" value="ECO:0007669"/>
    <property type="project" value="UniProtKB-EC"/>
</dbReference>
<dbReference type="GO" id="GO:0008899">
    <property type="term" value="F:homoserine O-succinyltransferase activity"/>
    <property type="evidence" value="ECO:0007669"/>
    <property type="project" value="UniProtKB-UniRule"/>
</dbReference>
<dbReference type="GO" id="GO:0019281">
    <property type="term" value="P:L-methionine biosynthetic process from homoserine via O-succinyl-L-homoserine and cystathionine"/>
    <property type="evidence" value="ECO:0007669"/>
    <property type="project" value="InterPro"/>
</dbReference>
<dbReference type="CDD" id="cd03131">
    <property type="entry name" value="GATase1_HTS"/>
    <property type="match status" value="1"/>
</dbReference>
<dbReference type="Gene3D" id="3.40.50.880">
    <property type="match status" value="1"/>
</dbReference>
<dbReference type="HAMAP" id="MF_00295">
    <property type="entry name" value="MetA_acyltransf"/>
    <property type="match status" value="1"/>
</dbReference>
<dbReference type="InterPro" id="IPR029062">
    <property type="entry name" value="Class_I_gatase-like"/>
</dbReference>
<dbReference type="InterPro" id="IPR005697">
    <property type="entry name" value="HST_MetA"/>
</dbReference>
<dbReference type="InterPro" id="IPR033752">
    <property type="entry name" value="MetA_family"/>
</dbReference>
<dbReference type="NCBIfam" id="TIGR01001">
    <property type="entry name" value="metA"/>
    <property type="match status" value="1"/>
</dbReference>
<dbReference type="PANTHER" id="PTHR20919">
    <property type="entry name" value="HOMOSERINE O-SUCCINYLTRANSFERASE"/>
    <property type="match status" value="1"/>
</dbReference>
<dbReference type="PANTHER" id="PTHR20919:SF0">
    <property type="entry name" value="HOMOSERINE O-SUCCINYLTRANSFERASE"/>
    <property type="match status" value="1"/>
</dbReference>
<dbReference type="Pfam" id="PF04204">
    <property type="entry name" value="HTS"/>
    <property type="match status" value="1"/>
</dbReference>
<dbReference type="PIRSF" id="PIRSF000450">
    <property type="entry name" value="H_ser_succinyltr"/>
    <property type="match status" value="1"/>
</dbReference>
<dbReference type="SUPFAM" id="SSF52317">
    <property type="entry name" value="Class I glutamine amidotransferase-like"/>
    <property type="match status" value="1"/>
</dbReference>
<gene>
    <name evidence="1" type="primary">metAA</name>
    <name type="ordered locus">RL4606</name>
</gene>
<evidence type="ECO:0000255" key="1">
    <source>
        <dbReference type="HAMAP-Rule" id="MF_00295"/>
    </source>
</evidence>
<keyword id="KW-0012">Acyltransferase</keyword>
<keyword id="KW-0028">Amino-acid biosynthesis</keyword>
<keyword id="KW-0963">Cytoplasm</keyword>
<keyword id="KW-0486">Methionine biosynthesis</keyword>
<keyword id="KW-0808">Transferase</keyword>
<protein>
    <recommendedName>
        <fullName evidence="1">Homoserine O-acetyltransferase</fullName>
        <shortName evidence="1">HAT</shortName>
        <ecNumber evidence="1">2.3.1.31</ecNumber>
    </recommendedName>
    <alternativeName>
        <fullName evidence="1">Homoserine transacetylase</fullName>
        <shortName evidence="1">HTA</shortName>
    </alternativeName>
</protein>
<name>METAA_RHIJ3</name>
<proteinExistence type="inferred from homology"/>
<comment type="function">
    <text evidence="1">Transfers an acetyl group from acetyl-CoA to L-homoserine, forming acetyl-L-homoserine.</text>
</comment>
<comment type="catalytic activity">
    <reaction evidence="1">
        <text>L-homoserine + acetyl-CoA = O-acetyl-L-homoserine + CoA</text>
        <dbReference type="Rhea" id="RHEA:13701"/>
        <dbReference type="ChEBI" id="CHEBI:57287"/>
        <dbReference type="ChEBI" id="CHEBI:57288"/>
        <dbReference type="ChEBI" id="CHEBI:57476"/>
        <dbReference type="ChEBI" id="CHEBI:57716"/>
        <dbReference type="EC" id="2.3.1.31"/>
    </reaction>
</comment>
<comment type="pathway">
    <text evidence="1">Amino-acid biosynthesis; L-methionine biosynthesis via de novo pathway; O-acetyl-L-homoserine from L-homoserine: step 1/1.</text>
</comment>
<comment type="subcellular location">
    <subcellularLocation>
        <location evidence="1">Cytoplasm</location>
    </subcellularLocation>
</comment>
<comment type="similarity">
    <text evidence="1">Belongs to the MetA family.</text>
</comment>
<sequence length="307" mass="35590">MPIKIPDTLPAFETLVQEGVRVMTETLAIRQDIRPLQIGLLNLMPNKIKTELQMARLVGASPLQVELSLIRIGGHKAKNTSEDHLLAFYQTWEEVKHRKFDGFIITGAPIELLPYEDVTYWPEMQEILDWTETNVHSTMNVCWGAMAAVYHFHGVPKYELKEKAFGVYRHRNLKPSSIYLNGFSDNFEVPVSRWTEVRRADIEKSESLEILMESSEMGVCLVHEKRGRRLYMFNHVEYDSTSLSDEYFRDVNAGVPIKMPHNYFPHNDPALAPQNRWRSHAHLLFGNWINEIYQTTPFDVEEIGTDL</sequence>
<organism>
    <name type="scientific">Rhizobium johnstonii (strain DSM 114642 / LMG 32736 / 3841)</name>
    <name type="common">Rhizobium leguminosarum bv. viciae</name>
    <dbReference type="NCBI Taxonomy" id="216596"/>
    <lineage>
        <taxon>Bacteria</taxon>
        <taxon>Pseudomonadati</taxon>
        <taxon>Pseudomonadota</taxon>
        <taxon>Alphaproteobacteria</taxon>
        <taxon>Hyphomicrobiales</taxon>
        <taxon>Rhizobiaceae</taxon>
        <taxon>Rhizobium/Agrobacterium group</taxon>
        <taxon>Rhizobium</taxon>
        <taxon>Rhizobium johnstonii</taxon>
    </lineage>
</organism>